<organism>
    <name type="scientific">Chlamydia pneumoniae</name>
    <name type="common">Chlamydophila pneumoniae</name>
    <dbReference type="NCBI Taxonomy" id="83558"/>
    <lineage>
        <taxon>Bacteria</taxon>
        <taxon>Pseudomonadati</taxon>
        <taxon>Chlamydiota</taxon>
        <taxon>Chlamydiia</taxon>
        <taxon>Chlamydiales</taxon>
        <taxon>Chlamydiaceae</taxon>
        <taxon>Chlamydia/Chlamydophila group</taxon>
        <taxon>Chlamydia</taxon>
    </lineage>
</organism>
<gene>
    <name type="ordered locus">CPn_0344</name>
    <name type="ordered locus">CP_0416</name>
    <name type="ordered locus">CPj0344</name>
    <name type="ordered locus">CpB0350</name>
</gene>
<name>Y344_CHLPN</name>
<accession>Q9K275</accession>
<accession>Q9JSG0</accession>
<accession>Q9Z8J9</accession>
<dbReference type="EC" id="3.4.24.-"/>
<dbReference type="EMBL" id="AE001363">
    <property type="protein sequence ID" value="AAD18488.1"/>
    <property type="molecule type" value="Genomic_DNA"/>
</dbReference>
<dbReference type="EMBL" id="AE002161">
    <property type="protein sequence ID" value="AAF38260.1"/>
    <property type="molecule type" value="Genomic_DNA"/>
</dbReference>
<dbReference type="EMBL" id="BA000008">
    <property type="protein sequence ID" value="BAA98552.1"/>
    <property type="molecule type" value="Genomic_DNA"/>
</dbReference>
<dbReference type="EMBL" id="AE009440">
    <property type="protein sequence ID" value="AAP98282.1"/>
    <property type="molecule type" value="Genomic_DNA"/>
</dbReference>
<dbReference type="PIR" id="A72091">
    <property type="entry name" value="A72091"/>
</dbReference>
<dbReference type="PIR" id="D81578">
    <property type="entry name" value="D81578"/>
</dbReference>
<dbReference type="PIR" id="F86533">
    <property type="entry name" value="F86533"/>
</dbReference>
<dbReference type="RefSeq" id="NP_224544.1">
    <property type="nucleotide sequence ID" value="NC_000922.1"/>
</dbReference>
<dbReference type="RefSeq" id="WP_010882987.1">
    <property type="nucleotide sequence ID" value="NZ_LN847257.1"/>
</dbReference>
<dbReference type="RefSeq" id="WP_010892060.1">
    <property type="nucleotide sequence ID" value="NZ_LN846995.1"/>
</dbReference>
<dbReference type="STRING" id="406984.CPK_ORF00850"/>
<dbReference type="GeneID" id="45050389"/>
<dbReference type="KEGG" id="cpa:CP_0416"/>
<dbReference type="KEGG" id="cpj:yaeL"/>
<dbReference type="KEGG" id="cpn:CPn_0344"/>
<dbReference type="KEGG" id="cpt:CpB0350"/>
<dbReference type="PATRIC" id="fig|115713.3.peg.380"/>
<dbReference type="eggNOG" id="COG0750">
    <property type="taxonomic scope" value="Bacteria"/>
</dbReference>
<dbReference type="HOGENOM" id="CLU_025778_0_0_0"/>
<dbReference type="OMA" id="YSRIVGW"/>
<dbReference type="OrthoDB" id="9782003at2"/>
<dbReference type="Proteomes" id="UP000000583">
    <property type="component" value="Chromosome"/>
</dbReference>
<dbReference type="Proteomes" id="UP000000801">
    <property type="component" value="Chromosome"/>
</dbReference>
<dbReference type="GO" id="GO:0005886">
    <property type="term" value="C:plasma membrane"/>
    <property type="evidence" value="ECO:0007669"/>
    <property type="project" value="UniProtKB-SubCell"/>
</dbReference>
<dbReference type="GO" id="GO:0046872">
    <property type="term" value="F:metal ion binding"/>
    <property type="evidence" value="ECO:0007669"/>
    <property type="project" value="UniProtKB-KW"/>
</dbReference>
<dbReference type="GO" id="GO:0004222">
    <property type="term" value="F:metalloendopeptidase activity"/>
    <property type="evidence" value="ECO:0007669"/>
    <property type="project" value="InterPro"/>
</dbReference>
<dbReference type="GO" id="GO:0006508">
    <property type="term" value="P:proteolysis"/>
    <property type="evidence" value="ECO:0007669"/>
    <property type="project" value="UniProtKB-KW"/>
</dbReference>
<dbReference type="CDD" id="cd06163">
    <property type="entry name" value="S2P-M50_PDZ_RseP-like"/>
    <property type="match status" value="1"/>
</dbReference>
<dbReference type="InterPro" id="IPR036034">
    <property type="entry name" value="PDZ_sf"/>
</dbReference>
<dbReference type="InterPro" id="IPR004387">
    <property type="entry name" value="Pept_M50_Zn"/>
</dbReference>
<dbReference type="InterPro" id="IPR008915">
    <property type="entry name" value="Peptidase_M50"/>
</dbReference>
<dbReference type="PANTHER" id="PTHR42837:SF2">
    <property type="entry name" value="MEMBRANE METALLOPROTEASE ARASP2, CHLOROPLASTIC-RELATED"/>
    <property type="match status" value="1"/>
</dbReference>
<dbReference type="PANTHER" id="PTHR42837">
    <property type="entry name" value="REGULATOR OF SIGMA-E PROTEASE RSEP"/>
    <property type="match status" value="1"/>
</dbReference>
<dbReference type="Pfam" id="PF02163">
    <property type="entry name" value="Peptidase_M50"/>
    <property type="match status" value="1"/>
</dbReference>
<dbReference type="SUPFAM" id="SSF50156">
    <property type="entry name" value="PDZ domain-like"/>
    <property type="match status" value="2"/>
</dbReference>
<dbReference type="PROSITE" id="PS00142">
    <property type="entry name" value="ZINC_PROTEASE"/>
    <property type="match status" value="1"/>
</dbReference>
<feature type="chain" id="PRO_0000088436" description="Putative zinc metalloprotease CPn_0344/CP_0416/CPj0344/CpB0350">
    <location>
        <begin position="1"/>
        <end position="621"/>
    </location>
</feature>
<feature type="transmembrane region" description="Helical" evidence="2">
    <location>
        <begin position="103"/>
        <end position="125"/>
    </location>
</feature>
<feature type="transmembrane region" description="Helical" evidence="2">
    <location>
        <begin position="561"/>
        <end position="583"/>
    </location>
</feature>
<feature type="transmembrane region" description="Helical" evidence="2">
    <location>
        <begin position="596"/>
        <end position="613"/>
    </location>
</feature>
<feature type="active site" evidence="3">
    <location>
        <position position="21"/>
    </location>
</feature>
<feature type="binding site" evidence="3">
    <location>
        <position position="20"/>
    </location>
    <ligand>
        <name>Zn(2+)</name>
        <dbReference type="ChEBI" id="CHEBI:29105"/>
        <note>catalytic</note>
    </ligand>
</feature>
<feature type="binding site" evidence="3">
    <location>
        <position position="24"/>
    </location>
    <ligand>
        <name>Zn(2+)</name>
        <dbReference type="ChEBI" id="CHEBI:29105"/>
        <note>catalytic</note>
    </ligand>
</feature>
<feature type="sequence conflict" description="In Ref. 1; AAD18488." evidence="4" ref="1">
    <original>G</original>
    <variation>S</variation>
    <location>
        <position position="224"/>
    </location>
</feature>
<feature type="sequence conflict" description="In Ref. 1; AAD18488." evidence="4" ref="1">
    <original>T</original>
    <variation>K</variation>
    <location>
        <position position="584"/>
    </location>
</feature>
<feature type="sequence conflict" description="In Ref. 3; BAA98552." evidence="4" ref="3">
    <original>V</original>
    <variation>D</variation>
    <location>
        <position position="598"/>
    </location>
</feature>
<protein>
    <recommendedName>
        <fullName>Putative zinc metalloprotease CPn_0344/CP_0416/CPj0344/CpB0350</fullName>
        <ecNumber>3.4.24.-</ecNumber>
    </recommendedName>
</protein>
<evidence type="ECO:0000250" key="1"/>
<evidence type="ECO:0000255" key="2"/>
<evidence type="ECO:0000255" key="3">
    <source>
        <dbReference type="PROSITE-ProRule" id="PRU10095"/>
    </source>
</evidence>
<evidence type="ECO:0000305" key="4"/>
<sequence>MTIIYFILAALALGILVLIHELGHLVVAKAVGMAVESFSIGFGPALFKKRIGGIEYRIGCIPFGGYVRIRGMERTKEKGEKGKIDSVYDIPQGFFSKSPWKRILVLVAGPLANILLAVLAFSILYMNGGRSKNYSDCSKVVGWVHPVLQAEGLLPGDEILTCNGKPYVGDKDMLTTSLLEGHLNLEIKRPGYLTVPSKEFAIDVEFDPTKFGVPCSGASYLLYGNQVPLTKNSPMENSELRPNDRFVWMDGTLLFSMAQISQILNESYAFVKVARNDKIFFSRQPRVLASVLHYTPYLRNELIDTQYEAGLKGKWSSLYTLPYVINSYGYIEGELTAIDPESPLPQPQERLQLGDRILAIDGTPVSGSVDILRLVQNHRVSIIVQQMSPQELEEVNSRDADKRFIASYHSEDLLQILNHLGESHPVEVAGPYRLLDPVQPRPWIDVYSSESLDKQLEVAKKIKNKDKQRYYLERLDAEKQKPSLGISLKDLKVRYNPSPVVMLSNITKESLITLKALVTGHLSPQWLSGPVGIVQVLHTGWSVGFSEVLFWIGLISMNLAVLNLLPIPVLDGGYILLCLWEIVTRRRLNMKIVERILVPFTFLLIIFFIFLTFQDLFRFFG</sequence>
<comment type="cofactor">
    <cofactor evidence="4">
        <name>Zn(2+)</name>
        <dbReference type="ChEBI" id="CHEBI:29105"/>
    </cofactor>
</comment>
<comment type="subcellular location">
    <subcellularLocation>
        <location evidence="1">Cell inner membrane</location>
        <topology evidence="1">Multi-pass membrane protein</topology>
    </subcellularLocation>
</comment>
<comment type="similarity">
    <text evidence="4">Belongs to the peptidase M50B family.</text>
</comment>
<proteinExistence type="inferred from homology"/>
<reference key="1">
    <citation type="journal article" date="1999" name="Nat. Genet.">
        <title>Comparative genomes of Chlamydia pneumoniae and C. trachomatis.</title>
        <authorList>
            <person name="Kalman S."/>
            <person name="Mitchell W.P."/>
            <person name="Marathe R."/>
            <person name="Lammel C.J."/>
            <person name="Fan J."/>
            <person name="Hyman R.W."/>
            <person name="Olinger L."/>
            <person name="Grimwood J."/>
            <person name="Davis R.W."/>
            <person name="Stephens R.S."/>
        </authorList>
    </citation>
    <scope>NUCLEOTIDE SEQUENCE [LARGE SCALE GENOMIC DNA]</scope>
    <source>
        <strain>CWL029</strain>
    </source>
</reference>
<reference key="2">
    <citation type="journal article" date="2000" name="Nucleic Acids Res.">
        <title>Genome sequences of Chlamydia trachomatis MoPn and Chlamydia pneumoniae AR39.</title>
        <authorList>
            <person name="Read T.D."/>
            <person name="Brunham R.C."/>
            <person name="Shen C."/>
            <person name="Gill S.R."/>
            <person name="Heidelberg J.F."/>
            <person name="White O."/>
            <person name="Hickey E.K."/>
            <person name="Peterson J.D."/>
            <person name="Utterback T.R."/>
            <person name="Berry K.J."/>
            <person name="Bass S."/>
            <person name="Linher K.D."/>
            <person name="Weidman J.F."/>
            <person name="Khouri H.M."/>
            <person name="Craven B."/>
            <person name="Bowman C."/>
            <person name="Dodson R.J."/>
            <person name="Gwinn M.L."/>
            <person name="Nelson W.C."/>
            <person name="DeBoy R.T."/>
            <person name="Kolonay J.F."/>
            <person name="McClarty G."/>
            <person name="Salzberg S.L."/>
            <person name="Eisen J.A."/>
            <person name="Fraser C.M."/>
        </authorList>
    </citation>
    <scope>NUCLEOTIDE SEQUENCE [LARGE SCALE GENOMIC DNA]</scope>
    <source>
        <strain>AR39</strain>
    </source>
</reference>
<reference key="3">
    <citation type="journal article" date="2000" name="Nucleic Acids Res.">
        <title>Comparison of whole genome sequences of Chlamydia pneumoniae J138 from Japan and CWL029 from USA.</title>
        <authorList>
            <person name="Shirai M."/>
            <person name="Hirakawa H."/>
            <person name="Kimoto M."/>
            <person name="Tabuchi M."/>
            <person name="Kishi F."/>
            <person name="Ouchi K."/>
            <person name="Shiba T."/>
            <person name="Ishii K."/>
            <person name="Hattori M."/>
            <person name="Kuhara S."/>
            <person name="Nakazawa T."/>
        </authorList>
    </citation>
    <scope>NUCLEOTIDE SEQUENCE [LARGE SCALE GENOMIC DNA]</scope>
    <source>
        <strain>J138</strain>
    </source>
</reference>
<reference key="4">
    <citation type="submission" date="2002-05" db="EMBL/GenBank/DDBJ databases">
        <title>The genome sequence of Chlamydia pneumoniae TW183 and comparison with other Chlamydia strains based on whole genome sequence analysis.</title>
        <authorList>
            <person name="Geng M.M."/>
            <person name="Schuhmacher A."/>
            <person name="Muehldorfer I."/>
            <person name="Bensch K.W."/>
            <person name="Schaefer K.P."/>
            <person name="Schneider S."/>
            <person name="Pohl T."/>
            <person name="Essig A."/>
            <person name="Marre R."/>
            <person name="Melchers K."/>
        </authorList>
    </citation>
    <scope>NUCLEOTIDE SEQUENCE [LARGE SCALE GENOMIC DNA]</scope>
    <source>
        <strain>TW-183</strain>
    </source>
</reference>
<keyword id="KW-0997">Cell inner membrane</keyword>
<keyword id="KW-1003">Cell membrane</keyword>
<keyword id="KW-0378">Hydrolase</keyword>
<keyword id="KW-0472">Membrane</keyword>
<keyword id="KW-0479">Metal-binding</keyword>
<keyword id="KW-0482">Metalloprotease</keyword>
<keyword id="KW-0645">Protease</keyword>
<keyword id="KW-0812">Transmembrane</keyword>
<keyword id="KW-1133">Transmembrane helix</keyword>
<keyword id="KW-0862">Zinc</keyword>